<proteinExistence type="inferred from homology"/>
<comment type="function">
    <text evidence="1">Catalyzes the synthesis of GMP from XMP.</text>
</comment>
<comment type="catalytic activity">
    <reaction evidence="1">
        <text>XMP + L-glutamine + ATP + H2O = GMP + L-glutamate + AMP + diphosphate + 2 H(+)</text>
        <dbReference type="Rhea" id="RHEA:11680"/>
        <dbReference type="ChEBI" id="CHEBI:15377"/>
        <dbReference type="ChEBI" id="CHEBI:15378"/>
        <dbReference type="ChEBI" id="CHEBI:29985"/>
        <dbReference type="ChEBI" id="CHEBI:30616"/>
        <dbReference type="ChEBI" id="CHEBI:33019"/>
        <dbReference type="ChEBI" id="CHEBI:57464"/>
        <dbReference type="ChEBI" id="CHEBI:58115"/>
        <dbReference type="ChEBI" id="CHEBI:58359"/>
        <dbReference type="ChEBI" id="CHEBI:456215"/>
        <dbReference type="EC" id="6.3.5.2"/>
    </reaction>
</comment>
<comment type="pathway">
    <text evidence="1">Purine metabolism; GMP biosynthesis; GMP from XMP (L-Gln route): step 1/1.</text>
</comment>
<comment type="subunit">
    <text evidence="1">Homodimer.</text>
</comment>
<feature type="chain" id="PRO_1000120410" description="GMP synthase [glutamine-hydrolyzing]">
    <location>
        <begin position="1"/>
        <end position="525"/>
    </location>
</feature>
<feature type="domain" description="Glutamine amidotransferase type-1" evidence="1">
    <location>
        <begin position="8"/>
        <end position="207"/>
    </location>
</feature>
<feature type="domain" description="GMPS ATP-PPase" evidence="1">
    <location>
        <begin position="208"/>
        <end position="400"/>
    </location>
</feature>
<feature type="active site" description="Nucleophile" evidence="1">
    <location>
        <position position="85"/>
    </location>
</feature>
<feature type="active site" evidence="1">
    <location>
        <position position="181"/>
    </location>
</feature>
<feature type="active site" evidence="1">
    <location>
        <position position="183"/>
    </location>
</feature>
<feature type="binding site" evidence="1">
    <location>
        <begin position="235"/>
        <end position="241"/>
    </location>
    <ligand>
        <name>ATP</name>
        <dbReference type="ChEBI" id="CHEBI:30616"/>
    </ligand>
</feature>
<name>GUAA_SHESM</name>
<protein>
    <recommendedName>
        <fullName evidence="1">GMP synthase [glutamine-hydrolyzing]</fullName>
        <ecNumber evidence="1">6.3.5.2</ecNumber>
    </recommendedName>
    <alternativeName>
        <fullName evidence="1">GMP synthetase</fullName>
    </alternativeName>
    <alternativeName>
        <fullName evidence="1">Glutamine amidotransferase</fullName>
    </alternativeName>
</protein>
<keyword id="KW-0067">ATP-binding</keyword>
<keyword id="KW-0315">Glutamine amidotransferase</keyword>
<keyword id="KW-0332">GMP biosynthesis</keyword>
<keyword id="KW-0436">Ligase</keyword>
<keyword id="KW-0547">Nucleotide-binding</keyword>
<keyword id="KW-0658">Purine biosynthesis</keyword>
<accession>Q0HKV2</accession>
<evidence type="ECO:0000255" key="1">
    <source>
        <dbReference type="HAMAP-Rule" id="MF_00344"/>
    </source>
</evidence>
<dbReference type="EC" id="6.3.5.2" evidence="1"/>
<dbReference type="EMBL" id="CP000446">
    <property type="protein sequence ID" value="ABI38315.1"/>
    <property type="molecule type" value="Genomic_DNA"/>
</dbReference>
<dbReference type="RefSeq" id="WP_011622023.1">
    <property type="nucleotide sequence ID" value="NC_008321.1"/>
</dbReference>
<dbReference type="SMR" id="Q0HKV2"/>
<dbReference type="MEROPS" id="C26.A07"/>
<dbReference type="KEGG" id="she:Shewmr4_1235"/>
<dbReference type="HOGENOM" id="CLU_014340_0_5_6"/>
<dbReference type="UniPathway" id="UPA00189">
    <property type="reaction ID" value="UER00296"/>
</dbReference>
<dbReference type="GO" id="GO:0005829">
    <property type="term" value="C:cytosol"/>
    <property type="evidence" value="ECO:0007669"/>
    <property type="project" value="TreeGrafter"/>
</dbReference>
<dbReference type="GO" id="GO:0005524">
    <property type="term" value="F:ATP binding"/>
    <property type="evidence" value="ECO:0007669"/>
    <property type="project" value="UniProtKB-UniRule"/>
</dbReference>
<dbReference type="GO" id="GO:0003921">
    <property type="term" value="F:GMP synthase activity"/>
    <property type="evidence" value="ECO:0007669"/>
    <property type="project" value="InterPro"/>
</dbReference>
<dbReference type="CDD" id="cd01742">
    <property type="entry name" value="GATase1_GMP_Synthase"/>
    <property type="match status" value="1"/>
</dbReference>
<dbReference type="CDD" id="cd01997">
    <property type="entry name" value="GMP_synthase_C"/>
    <property type="match status" value="1"/>
</dbReference>
<dbReference type="FunFam" id="3.30.300.10:FF:000002">
    <property type="entry name" value="GMP synthase [glutamine-hydrolyzing]"/>
    <property type="match status" value="1"/>
</dbReference>
<dbReference type="FunFam" id="3.40.50.620:FF:000001">
    <property type="entry name" value="GMP synthase [glutamine-hydrolyzing]"/>
    <property type="match status" value="1"/>
</dbReference>
<dbReference type="FunFam" id="3.40.50.880:FF:000001">
    <property type="entry name" value="GMP synthase [glutamine-hydrolyzing]"/>
    <property type="match status" value="1"/>
</dbReference>
<dbReference type="Gene3D" id="3.30.300.10">
    <property type="match status" value="1"/>
</dbReference>
<dbReference type="Gene3D" id="3.40.50.880">
    <property type="match status" value="1"/>
</dbReference>
<dbReference type="Gene3D" id="3.40.50.620">
    <property type="entry name" value="HUPs"/>
    <property type="match status" value="1"/>
</dbReference>
<dbReference type="HAMAP" id="MF_00344">
    <property type="entry name" value="GMP_synthase"/>
    <property type="match status" value="1"/>
</dbReference>
<dbReference type="InterPro" id="IPR029062">
    <property type="entry name" value="Class_I_gatase-like"/>
</dbReference>
<dbReference type="InterPro" id="IPR017926">
    <property type="entry name" value="GATASE"/>
</dbReference>
<dbReference type="InterPro" id="IPR001674">
    <property type="entry name" value="GMP_synth_C"/>
</dbReference>
<dbReference type="InterPro" id="IPR004739">
    <property type="entry name" value="GMP_synth_GATase"/>
</dbReference>
<dbReference type="InterPro" id="IPR022955">
    <property type="entry name" value="GMP_synthase"/>
</dbReference>
<dbReference type="InterPro" id="IPR025777">
    <property type="entry name" value="GMPS_ATP_PPase_dom"/>
</dbReference>
<dbReference type="InterPro" id="IPR022310">
    <property type="entry name" value="NAD/GMP_synthase"/>
</dbReference>
<dbReference type="InterPro" id="IPR014729">
    <property type="entry name" value="Rossmann-like_a/b/a_fold"/>
</dbReference>
<dbReference type="NCBIfam" id="TIGR00884">
    <property type="entry name" value="guaA_Cterm"/>
    <property type="match status" value="1"/>
</dbReference>
<dbReference type="NCBIfam" id="TIGR00888">
    <property type="entry name" value="guaA_Nterm"/>
    <property type="match status" value="1"/>
</dbReference>
<dbReference type="NCBIfam" id="NF000848">
    <property type="entry name" value="PRK00074.1"/>
    <property type="match status" value="1"/>
</dbReference>
<dbReference type="PANTHER" id="PTHR11922:SF2">
    <property type="entry name" value="GMP SYNTHASE [GLUTAMINE-HYDROLYZING]"/>
    <property type="match status" value="1"/>
</dbReference>
<dbReference type="PANTHER" id="PTHR11922">
    <property type="entry name" value="GMP SYNTHASE-RELATED"/>
    <property type="match status" value="1"/>
</dbReference>
<dbReference type="Pfam" id="PF00117">
    <property type="entry name" value="GATase"/>
    <property type="match status" value="1"/>
</dbReference>
<dbReference type="Pfam" id="PF00958">
    <property type="entry name" value="GMP_synt_C"/>
    <property type="match status" value="1"/>
</dbReference>
<dbReference type="Pfam" id="PF02540">
    <property type="entry name" value="NAD_synthase"/>
    <property type="match status" value="1"/>
</dbReference>
<dbReference type="PRINTS" id="PR00097">
    <property type="entry name" value="ANTSNTHASEII"/>
</dbReference>
<dbReference type="PRINTS" id="PR00099">
    <property type="entry name" value="CPSGATASE"/>
</dbReference>
<dbReference type="PRINTS" id="PR00096">
    <property type="entry name" value="GATASE"/>
</dbReference>
<dbReference type="SUPFAM" id="SSF52402">
    <property type="entry name" value="Adenine nucleotide alpha hydrolases-like"/>
    <property type="match status" value="1"/>
</dbReference>
<dbReference type="SUPFAM" id="SSF52317">
    <property type="entry name" value="Class I glutamine amidotransferase-like"/>
    <property type="match status" value="1"/>
</dbReference>
<dbReference type="SUPFAM" id="SSF54810">
    <property type="entry name" value="GMP synthetase C-terminal dimerisation domain"/>
    <property type="match status" value="1"/>
</dbReference>
<dbReference type="PROSITE" id="PS51273">
    <property type="entry name" value="GATASE_TYPE_1"/>
    <property type="match status" value="1"/>
</dbReference>
<dbReference type="PROSITE" id="PS51553">
    <property type="entry name" value="GMPS_ATP_PPASE"/>
    <property type="match status" value="1"/>
</dbReference>
<gene>
    <name evidence="1" type="primary">guaA</name>
    <name type="ordered locus">Shewmr4_1235</name>
</gene>
<sequence length="525" mass="58197">MSDIHEHKILILDFGSQYTQLIARRIREIGVYCELWAWDVTEAQIREFAPNGIILAGGPESVTADNSPRAPEYVFNAGVPVLGICYGMQTMSEQLGGKVIQGVGEGEFGYAQIEMLAQSALFKDIEDAVSADGKSLLDVWMSHGDKVSAIPEGFVAVAKTDTCPFAAMSCEEKRFYGVQFHPEVTHTRQGMRMLSHFALDICGCAANWKPSSIIEDAIERLKKQVGDDEVILGLSGGVDSSVVAMLLHRAIGKKLTCVFVDNGLLRLNEAKQVMEMFGDHFGLNIVHVDAENRFLDALKGEADPEAKRKIIGRVFVEIFDEEAKKCVNAKWLAQGTIYPDVIESAGSATGKAHVIKSHHNVGGLPDDMELGLVEPLRELFKDEVRKIGLELGLPYNMLYRHPFPGPGLGVRVLGEVKKEYCDLLRRADAIFIEELHKADLYNKVSQAFTVFLPVRSVGVMGDGRKYDWVVSLRAVETIDFMTAHWAHLPYDFLGRVSNRIINEIDGISRVVYDISGKPPATIEWE</sequence>
<reference key="1">
    <citation type="submission" date="2006-08" db="EMBL/GenBank/DDBJ databases">
        <title>Complete sequence of Shewanella sp. MR-4.</title>
        <authorList>
            <consortium name="US DOE Joint Genome Institute"/>
            <person name="Copeland A."/>
            <person name="Lucas S."/>
            <person name="Lapidus A."/>
            <person name="Barry K."/>
            <person name="Detter J.C."/>
            <person name="Glavina del Rio T."/>
            <person name="Hammon N."/>
            <person name="Israni S."/>
            <person name="Dalin E."/>
            <person name="Tice H."/>
            <person name="Pitluck S."/>
            <person name="Kiss H."/>
            <person name="Brettin T."/>
            <person name="Bruce D."/>
            <person name="Han C."/>
            <person name="Tapia R."/>
            <person name="Gilna P."/>
            <person name="Schmutz J."/>
            <person name="Larimer F."/>
            <person name="Land M."/>
            <person name="Hauser L."/>
            <person name="Kyrpides N."/>
            <person name="Mikhailova N."/>
            <person name="Nealson K."/>
            <person name="Konstantinidis K."/>
            <person name="Klappenbach J."/>
            <person name="Tiedje J."/>
            <person name="Richardson P."/>
        </authorList>
    </citation>
    <scope>NUCLEOTIDE SEQUENCE [LARGE SCALE GENOMIC DNA]</scope>
    <source>
        <strain>MR-4</strain>
    </source>
</reference>
<organism>
    <name type="scientific">Shewanella sp. (strain MR-4)</name>
    <dbReference type="NCBI Taxonomy" id="60480"/>
    <lineage>
        <taxon>Bacteria</taxon>
        <taxon>Pseudomonadati</taxon>
        <taxon>Pseudomonadota</taxon>
        <taxon>Gammaproteobacteria</taxon>
        <taxon>Alteromonadales</taxon>
        <taxon>Shewanellaceae</taxon>
        <taxon>Shewanella</taxon>
    </lineage>
</organism>